<evidence type="ECO:0000255" key="1">
    <source>
        <dbReference type="HAMAP-Rule" id="MF_01850"/>
    </source>
</evidence>
<accession>Q4ZQ35</accession>
<sequence>MGTLSVNQNKLQKRLRRLAGEAVADFNMIEEGDKVMVCLSGGKDSYTMLDVLMHLQKVAPIKFDIVAVNMDQKQPGFPEHVLPAYLKELGIEYHIVEKDTYSVVKELIPEGKTTCSLCSRLRRGTLYTFADEIGATKMALGHHRDDIVETFFLNMFFNGSLKAMPPKLRADDGRNVVIRPLAYCHEKDIQAYSDLKQFPIIPCNLCGSQENLQRQVVKEMLQDWERKTPGRTESIFRALQNVQPSQLADRNLFDFTNLRIDETAASRFVNVVNI</sequence>
<reference key="1">
    <citation type="journal article" date="2005" name="Proc. Natl. Acad. Sci. U.S.A.">
        <title>Comparison of the complete genome sequences of Pseudomonas syringae pv. syringae B728a and pv. tomato DC3000.</title>
        <authorList>
            <person name="Feil H."/>
            <person name="Feil W.S."/>
            <person name="Chain P."/>
            <person name="Larimer F."/>
            <person name="Dibartolo G."/>
            <person name="Copeland A."/>
            <person name="Lykidis A."/>
            <person name="Trong S."/>
            <person name="Nolan M."/>
            <person name="Goltsman E."/>
            <person name="Thiel J."/>
            <person name="Malfatti S."/>
            <person name="Loper J.E."/>
            <person name="Lapidus A."/>
            <person name="Detter J.C."/>
            <person name="Land M."/>
            <person name="Richardson P.M."/>
            <person name="Kyrpides N.C."/>
            <person name="Ivanova N."/>
            <person name="Lindow S.E."/>
        </authorList>
    </citation>
    <scope>NUCLEOTIDE SEQUENCE [LARGE SCALE GENOMIC DNA]</scope>
    <source>
        <strain>B728a</strain>
    </source>
</reference>
<feature type="chain" id="PRO_0000348804" description="tRNA-cytidine(32) 2-sulfurtransferase">
    <location>
        <begin position="1"/>
        <end position="274"/>
    </location>
</feature>
<feature type="short sequence motif" description="PP-loop motif" evidence="1">
    <location>
        <begin position="40"/>
        <end position="45"/>
    </location>
</feature>
<feature type="binding site" evidence="1">
    <location>
        <position position="115"/>
    </location>
    <ligand>
        <name>[4Fe-4S] cluster</name>
        <dbReference type="ChEBI" id="CHEBI:49883"/>
    </ligand>
</feature>
<feature type="binding site" evidence="1">
    <location>
        <position position="118"/>
    </location>
    <ligand>
        <name>[4Fe-4S] cluster</name>
        <dbReference type="ChEBI" id="CHEBI:49883"/>
    </ligand>
</feature>
<feature type="binding site" evidence="1">
    <location>
        <position position="206"/>
    </location>
    <ligand>
        <name>[4Fe-4S] cluster</name>
        <dbReference type="ChEBI" id="CHEBI:49883"/>
    </ligand>
</feature>
<dbReference type="EC" id="2.8.1.-" evidence="1"/>
<dbReference type="EMBL" id="CP000075">
    <property type="protein sequence ID" value="AAY38737.1"/>
    <property type="molecule type" value="Genomic_DNA"/>
</dbReference>
<dbReference type="RefSeq" id="WP_011268597.1">
    <property type="nucleotide sequence ID" value="NC_007005.1"/>
</dbReference>
<dbReference type="RefSeq" id="YP_236775.1">
    <property type="nucleotide sequence ID" value="NC_007005.1"/>
</dbReference>
<dbReference type="SMR" id="Q4ZQ35"/>
<dbReference type="STRING" id="205918.Psyr_3705"/>
<dbReference type="KEGG" id="psb:Psyr_3705"/>
<dbReference type="PATRIC" id="fig|205918.7.peg.3807"/>
<dbReference type="eggNOG" id="COG0037">
    <property type="taxonomic scope" value="Bacteria"/>
</dbReference>
<dbReference type="HOGENOM" id="CLU_026481_0_0_6"/>
<dbReference type="OrthoDB" id="9801054at2"/>
<dbReference type="Proteomes" id="UP000000426">
    <property type="component" value="Chromosome"/>
</dbReference>
<dbReference type="GO" id="GO:0005737">
    <property type="term" value="C:cytoplasm"/>
    <property type="evidence" value="ECO:0007669"/>
    <property type="project" value="UniProtKB-SubCell"/>
</dbReference>
<dbReference type="GO" id="GO:0051539">
    <property type="term" value="F:4 iron, 4 sulfur cluster binding"/>
    <property type="evidence" value="ECO:0007669"/>
    <property type="project" value="UniProtKB-UniRule"/>
</dbReference>
<dbReference type="GO" id="GO:0005524">
    <property type="term" value="F:ATP binding"/>
    <property type="evidence" value="ECO:0007669"/>
    <property type="project" value="UniProtKB-UniRule"/>
</dbReference>
<dbReference type="GO" id="GO:0000287">
    <property type="term" value="F:magnesium ion binding"/>
    <property type="evidence" value="ECO:0007669"/>
    <property type="project" value="UniProtKB-UniRule"/>
</dbReference>
<dbReference type="GO" id="GO:0016783">
    <property type="term" value="F:sulfurtransferase activity"/>
    <property type="evidence" value="ECO:0007669"/>
    <property type="project" value="UniProtKB-UniRule"/>
</dbReference>
<dbReference type="GO" id="GO:0000049">
    <property type="term" value="F:tRNA binding"/>
    <property type="evidence" value="ECO:0007669"/>
    <property type="project" value="UniProtKB-KW"/>
</dbReference>
<dbReference type="GO" id="GO:0034227">
    <property type="term" value="P:tRNA thio-modification"/>
    <property type="evidence" value="ECO:0007669"/>
    <property type="project" value="UniProtKB-UniRule"/>
</dbReference>
<dbReference type="CDD" id="cd24138">
    <property type="entry name" value="TtcA-like"/>
    <property type="match status" value="1"/>
</dbReference>
<dbReference type="Gene3D" id="3.40.50.620">
    <property type="entry name" value="HUPs"/>
    <property type="match status" value="1"/>
</dbReference>
<dbReference type="HAMAP" id="MF_01850">
    <property type="entry name" value="TtcA"/>
    <property type="match status" value="1"/>
</dbReference>
<dbReference type="InterPro" id="IPR014729">
    <property type="entry name" value="Rossmann-like_a/b/a_fold"/>
</dbReference>
<dbReference type="InterPro" id="IPR011063">
    <property type="entry name" value="TilS/TtcA_N"/>
</dbReference>
<dbReference type="InterPro" id="IPR012089">
    <property type="entry name" value="tRNA_Cyd_32_2_STrfase"/>
</dbReference>
<dbReference type="InterPro" id="IPR035107">
    <property type="entry name" value="tRNA_thiolation_TtcA_Ctu1"/>
</dbReference>
<dbReference type="NCBIfam" id="NF007972">
    <property type="entry name" value="PRK10696.1"/>
    <property type="match status" value="1"/>
</dbReference>
<dbReference type="PANTHER" id="PTHR43686:SF1">
    <property type="entry name" value="AMINOTRAN_5 DOMAIN-CONTAINING PROTEIN"/>
    <property type="match status" value="1"/>
</dbReference>
<dbReference type="PANTHER" id="PTHR43686">
    <property type="entry name" value="SULFURTRANSFERASE-RELATED"/>
    <property type="match status" value="1"/>
</dbReference>
<dbReference type="Pfam" id="PF01171">
    <property type="entry name" value="ATP_bind_3"/>
    <property type="match status" value="1"/>
</dbReference>
<dbReference type="PIRSF" id="PIRSF004976">
    <property type="entry name" value="ATPase_YdaO"/>
    <property type="match status" value="1"/>
</dbReference>
<dbReference type="SUPFAM" id="SSF52402">
    <property type="entry name" value="Adenine nucleotide alpha hydrolases-like"/>
    <property type="match status" value="1"/>
</dbReference>
<name>TTCA_PSEU2</name>
<comment type="function">
    <text evidence="1">Catalyzes the ATP-dependent 2-thiolation of cytidine in position 32 of tRNA, to form 2-thiocytidine (s(2)C32). The sulfur atoms are provided by the cysteine/cysteine desulfurase (IscS) system.</text>
</comment>
<comment type="catalytic activity">
    <reaction evidence="1">
        <text>cytidine(32) in tRNA + S-sulfanyl-L-cysteinyl-[cysteine desulfurase] + AH2 + ATP = 2-thiocytidine(32) in tRNA + L-cysteinyl-[cysteine desulfurase] + A + AMP + diphosphate + H(+)</text>
        <dbReference type="Rhea" id="RHEA:57048"/>
        <dbReference type="Rhea" id="RHEA-COMP:10288"/>
        <dbReference type="Rhea" id="RHEA-COMP:12157"/>
        <dbReference type="Rhea" id="RHEA-COMP:12158"/>
        <dbReference type="Rhea" id="RHEA-COMP:14821"/>
        <dbReference type="ChEBI" id="CHEBI:13193"/>
        <dbReference type="ChEBI" id="CHEBI:15378"/>
        <dbReference type="ChEBI" id="CHEBI:17499"/>
        <dbReference type="ChEBI" id="CHEBI:29950"/>
        <dbReference type="ChEBI" id="CHEBI:30616"/>
        <dbReference type="ChEBI" id="CHEBI:33019"/>
        <dbReference type="ChEBI" id="CHEBI:61963"/>
        <dbReference type="ChEBI" id="CHEBI:82748"/>
        <dbReference type="ChEBI" id="CHEBI:141453"/>
        <dbReference type="ChEBI" id="CHEBI:456215"/>
    </reaction>
    <physiologicalReaction direction="left-to-right" evidence="1">
        <dbReference type="Rhea" id="RHEA:57049"/>
    </physiologicalReaction>
</comment>
<comment type="cofactor">
    <cofactor evidence="1">
        <name>Mg(2+)</name>
        <dbReference type="ChEBI" id="CHEBI:18420"/>
    </cofactor>
</comment>
<comment type="cofactor">
    <cofactor evidence="1">
        <name>[4Fe-4S] cluster</name>
        <dbReference type="ChEBI" id="CHEBI:49883"/>
    </cofactor>
    <text evidence="1">Binds 1 [4Fe-4S] cluster per subunit. The cluster is chelated by three Cys residues, the fourth Fe has a free coordination site that may bind a sulfur atom transferred from the persulfide of IscS.</text>
</comment>
<comment type="pathway">
    <text evidence="1">tRNA modification.</text>
</comment>
<comment type="subunit">
    <text evidence="1">Homodimer.</text>
</comment>
<comment type="subcellular location">
    <subcellularLocation>
        <location evidence="1">Cytoplasm</location>
    </subcellularLocation>
</comment>
<comment type="miscellaneous">
    <text evidence="1">The thiolation reaction likely consists of two steps: a first activation step by ATP to form an adenylated intermediate of the target base of tRNA, and a second nucleophilic substitution step of the sulfur (S) atom supplied by the hydrosulfide attached to the Fe-S cluster.</text>
</comment>
<comment type="similarity">
    <text evidence="1">Belongs to the TtcA family.</text>
</comment>
<keyword id="KW-0004">4Fe-4S</keyword>
<keyword id="KW-0067">ATP-binding</keyword>
<keyword id="KW-0963">Cytoplasm</keyword>
<keyword id="KW-0408">Iron</keyword>
<keyword id="KW-0411">Iron-sulfur</keyword>
<keyword id="KW-0460">Magnesium</keyword>
<keyword id="KW-0479">Metal-binding</keyword>
<keyword id="KW-0547">Nucleotide-binding</keyword>
<keyword id="KW-0694">RNA-binding</keyword>
<keyword id="KW-0808">Transferase</keyword>
<keyword id="KW-0819">tRNA processing</keyword>
<keyword id="KW-0820">tRNA-binding</keyword>
<gene>
    <name evidence="1" type="primary">ttcA</name>
    <name type="ordered locus">Psyr_3705</name>
</gene>
<proteinExistence type="inferred from homology"/>
<protein>
    <recommendedName>
        <fullName evidence="1">tRNA-cytidine(32) 2-sulfurtransferase</fullName>
        <ecNumber evidence="1">2.8.1.-</ecNumber>
    </recommendedName>
    <alternativeName>
        <fullName evidence="1">Two-thiocytidine biosynthesis protein A</fullName>
    </alternativeName>
    <alternativeName>
        <fullName evidence="1">tRNA 2-thiocytidine biosynthesis protein TtcA</fullName>
    </alternativeName>
</protein>
<organism>
    <name type="scientific">Pseudomonas syringae pv. syringae (strain B728a)</name>
    <dbReference type="NCBI Taxonomy" id="205918"/>
    <lineage>
        <taxon>Bacteria</taxon>
        <taxon>Pseudomonadati</taxon>
        <taxon>Pseudomonadota</taxon>
        <taxon>Gammaproteobacteria</taxon>
        <taxon>Pseudomonadales</taxon>
        <taxon>Pseudomonadaceae</taxon>
        <taxon>Pseudomonas</taxon>
        <taxon>Pseudomonas syringae</taxon>
    </lineage>
</organism>